<name>CSLF8_ORYSJ</name>
<reference key="1">
    <citation type="journal article" date="2005" name="Nature">
        <title>The map-based sequence of the rice genome.</title>
        <authorList>
            <consortium name="International rice genome sequencing project (IRGSP)"/>
        </authorList>
    </citation>
    <scope>NUCLEOTIDE SEQUENCE [LARGE SCALE GENOMIC DNA]</scope>
    <source>
        <strain>cv. Nipponbare</strain>
    </source>
</reference>
<reference key="2">
    <citation type="journal article" date="2008" name="Nucleic Acids Res.">
        <title>The rice annotation project database (RAP-DB): 2008 update.</title>
        <authorList>
            <consortium name="The rice annotation project (RAP)"/>
        </authorList>
    </citation>
    <scope>GENOME REANNOTATION</scope>
    <source>
        <strain>cv. Nipponbare</strain>
    </source>
</reference>
<reference key="3">
    <citation type="journal article" date="2013" name="Rice">
        <title>Improvement of the Oryza sativa Nipponbare reference genome using next generation sequence and optical map data.</title>
        <authorList>
            <person name="Kawahara Y."/>
            <person name="de la Bastide M."/>
            <person name="Hamilton J.P."/>
            <person name="Kanamori H."/>
            <person name="McCombie W.R."/>
            <person name="Ouyang S."/>
            <person name="Schwartz D.C."/>
            <person name="Tanaka T."/>
            <person name="Wu J."/>
            <person name="Zhou S."/>
            <person name="Childs K.L."/>
            <person name="Davidson R.M."/>
            <person name="Lin H."/>
            <person name="Quesada-Ocampo L."/>
            <person name="Vaillancourt B."/>
            <person name="Sakai H."/>
            <person name="Lee S.S."/>
            <person name="Kim J."/>
            <person name="Numa H."/>
            <person name="Itoh T."/>
            <person name="Buell C.R."/>
            <person name="Matsumoto T."/>
        </authorList>
    </citation>
    <scope>GENOME REANNOTATION</scope>
    <source>
        <strain>cv. Nipponbare</strain>
    </source>
</reference>
<reference key="4">
    <citation type="journal article" date="2003" name="Science">
        <title>Collection, mapping, and annotation of over 28,000 cDNA clones from japonica rice.</title>
        <authorList>
            <consortium name="The rice full-length cDNA consortium"/>
        </authorList>
    </citation>
    <scope>NUCLEOTIDE SEQUENCE [LARGE SCALE MRNA]</scope>
    <source>
        <strain>cv. Nipponbare</strain>
    </source>
</reference>
<reference key="5">
    <citation type="journal article" date="2002" name="Plant Physiol.">
        <title>Cellulose synthase-like genes of rice.</title>
        <authorList>
            <person name="Hazen S.P."/>
            <person name="Scott-Craig J.S."/>
            <person name="Walton J.D."/>
        </authorList>
    </citation>
    <scope>GENE FAMILY</scope>
    <scope>NOMENCLATURE</scope>
</reference>
<gene>
    <name type="primary">CSFL8</name>
    <name type="ordered locus">Os07g0551700</name>
    <name type="ordered locus">LOC_Os07g36630</name>
    <name type="ORF">OSJNBb0041B22.114</name>
</gene>
<keyword id="KW-0961">Cell wall biogenesis/degradation</keyword>
<keyword id="KW-0328">Glycosyltransferase</keyword>
<keyword id="KW-0333">Golgi apparatus</keyword>
<keyword id="KW-0472">Membrane</keyword>
<keyword id="KW-1185">Reference proteome</keyword>
<keyword id="KW-0808">Transferase</keyword>
<keyword id="KW-0812">Transmembrane</keyword>
<keyword id="KW-1133">Transmembrane helix</keyword>
<comment type="function">
    <text evidence="1">May catalyze both beta-1,3 and beta-1,4 glycosidic linkage on beta-D-glucan. Essential for (1,3;1,4)-beta-D-glucans synthesis in grasses and cereals (Poaceae). The mixed-linked glucans (which are not present in walls of dicotyledons or most other monocotyledonous plants) are particularly important constituents of the walls of the starchy endosperm and aleurone cells of cereal grains such as oats, wheat, rice and barley. They can account for up to 70% by weight of the wall (By similarity).</text>
</comment>
<comment type="subcellular location">
    <subcellularLocation>
        <location evidence="3">Golgi apparatus membrane</location>
        <topology evidence="3">Multi-pass membrane protein</topology>
    </subcellularLocation>
</comment>
<comment type="similarity">
    <text evidence="3">Belongs to the glycosyltransferase 2 family. Plant cellulose synthase-like F subfamily.</text>
</comment>
<sequence length="886" mass="98774">MAANGGGGGAGGCSNGGGGGAVNGAAANGGGGGGGGSKGATTRRAKVSPMDRYWVPTDEKEMAAAVADGGEDGRRPLLFRTFTVRGILLHPYRLLTLVRLVAIVLFFIWRIRHPYADGMFFWWISVIGDFWFGVSWLLNQVAKLKPIRRVPDLNLLQQQFDLPDGNSNLPGLDVFINTVDPINEPMIYTMNAILSILAADYPVDKHACYLSDDGGSIIHYDGLLETAKFAALWVPFCRKHSIEPRAPESYFAVKSRPYAGSAPEDFLSDHRYMRREYDEFKVRLDALFTVIPKRSDAYNQAHAEEGVKATWMADGTEWPGTWIDPSENHKKGNHAGIVQVMLNHPSNQPQLGLPASTDSPVDFSNVDVRLPMLVYIAREKRPGYDHQKKAGAMNVQLRVSALLTNAPFIINFDGDHYVNNSKAFRAGICFMLDRREGDNTAFVQFPQRFDDVDPTDRYCNHNRVFFDATLLGLNGIQGPSYVGTGCMFRRVALYGVDPPRWRPDDGNIVDSSKKFGNLDSFISSIPIAANQERSIISPPALEESILQELSDAMACAYEDGTDWGKDVGWVYNIATEDVVTGFRLHRTGWRSMYCRMEPDAFRGTAPINLTERLYQILRWSGGSLEMFFSHNCPLLAGRRLNFMQRIAYINMTGYPVTSVFLLFYLLFPVIWIFRGIFYIQKPFPTYVLYLVIVIFMSEMIGMVEIKWAGLTLLDWIRNEQFYIIGATAVYPLAVLHIVLKCFGLKGVSFKLTAKQVASSTSEKFAELYDVQWAPLLFPTIVVIAVNICAIGAAIGKALFGGWSLMQMGDASLGLVFNVWILLLIYPFALGIMGRWSKRPYILFVLIVISFVIIALADIAIQAMRSGSVRLHFRRSGGANFPTSWGF</sequence>
<dbReference type="EC" id="2.4.1.-"/>
<dbReference type="EMBL" id="AP005126">
    <property type="protein sequence ID" value="BAC65371.1"/>
    <property type="molecule type" value="Genomic_DNA"/>
</dbReference>
<dbReference type="EMBL" id="AP008213">
    <property type="protein sequence ID" value="BAF21859.1"/>
    <property type="molecule type" value="Genomic_DNA"/>
</dbReference>
<dbReference type="EMBL" id="AP014963">
    <property type="protein sequence ID" value="BAT02056.1"/>
    <property type="molecule type" value="Genomic_DNA"/>
</dbReference>
<dbReference type="EMBL" id="AK067424">
    <property type="status" value="NOT_ANNOTATED_CDS"/>
    <property type="molecule type" value="mRNA"/>
</dbReference>
<dbReference type="RefSeq" id="XP_015645599.1">
    <property type="nucleotide sequence ID" value="XM_015790113.1"/>
</dbReference>
<dbReference type="SMR" id="Q84S18"/>
<dbReference type="FunCoup" id="Q84S18">
    <property type="interactions" value="9"/>
</dbReference>
<dbReference type="STRING" id="39947.Q84S18"/>
<dbReference type="CAZy" id="GT2">
    <property type="family name" value="Glycosyltransferase Family 2"/>
</dbReference>
<dbReference type="PaxDb" id="39947-Q84S18"/>
<dbReference type="EnsemblPlants" id="Os07t0551700-01">
    <property type="protein sequence ID" value="Os07t0551700-01"/>
    <property type="gene ID" value="Os07g0551700"/>
</dbReference>
<dbReference type="Gramene" id="Os07t0551700-01">
    <property type="protein sequence ID" value="Os07t0551700-01"/>
    <property type="gene ID" value="Os07g0551700"/>
</dbReference>
<dbReference type="KEGG" id="dosa:Os07g0551700"/>
<dbReference type="eggNOG" id="ENOG502QU14">
    <property type="taxonomic scope" value="Eukaryota"/>
</dbReference>
<dbReference type="HOGENOM" id="CLU_001418_3_1_1"/>
<dbReference type="InParanoid" id="Q84S18"/>
<dbReference type="OMA" id="QTHAEGV"/>
<dbReference type="OrthoDB" id="595132at2759"/>
<dbReference type="Proteomes" id="UP000000763">
    <property type="component" value="Chromosome 7"/>
</dbReference>
<dbReference type="Proteomes" id="UP000059680">
    <property type="component" value="Chromosome 7"/>
</dbReference>
<dbReference type="GO" id="GO:0000139">
    <property type="term" value="C:Golgi membrane"/>
    <property type="evidence" value="ECO:0007669"/>
    <property type="project" value="UniProtKB-SubCell"/>
</dbReference>
<dbReference type="GO" id="GO:0005886">
    <property type="term" value="C:plasma membrane"/>
    <property type="evidence" value="ECO:0000318"/>
    <property type="project" value="GO_Central"/>
</dbReference>
<dbReference type="GO" id="GO:0016760">
    <property type="term" value="F:cellulose synthase (UDP-forming) activity"/>
    <property type="evidence" value="ECO:0007669"/>
    <property type="project" value="InterPro"/>
</dbReference>
<dbReference type="GO" id="GO:0071555">
    <property type="term" value="P:cell wall organization"/>
    <property type="evidence" value="ECO:0007669"/>
    <property type="project" value="UniProtKB-KW"/>
</dbReference>
<dbReference type="GO" id="GO:0030244">
    <property type="term" value="P:cellulose biosynthetic process"/>
    <property type="evidence" value="ECO:0007669"/>
    <property type="project" value="InterPro"/>
</dbReference>
<dbReference type="GO" id="GO:0009833">
    <property type="term" value="P:plant-type primary cell wall biogenesis"/>
    <property type="evidence" value="ECO:0000318"/>
    <property type="project" value="GO_Central"/>
</dbReference>
<dbReference type="FunFam" id="3.90.550.10:FF:000027">
    <property type="entry name" value="Cellulose synthase-like protein D4"/>
    <property type="match status" value="1"/>
</dbReference>
<dbReference type="Gene3D" id="3.90.550.10">
    <property type="entry name" value="Spore Coat Polysaccharide Biosynthesis Protein SpsA, Chain A"/>
    <property type="match status" value="1"/>
</dbReference>
<dbReference type="InterPro" id="IPR005150">
    <property type="entry name" value="Cellulose_synth"/>
</dbReference>
<dbReference type="InterPro" id="IPR029044">
    <property type="entry name" value="Nucleotide-diphossugar_trans"/>
</dbReference>
<dbReference type="PANTHER" id="PTHR13301">
    <property type="entry name" value="X-BOX TRANSCRIPTION FACTOR-RELATED"/>
    <property type="match status" value="1"/>
</dbReference>
<dbReference type="Pfam" id="PF03552">
    <property type="entry name" value="Cellulose_synt"/>
    <property type="match status" value="2"/>
</dbReference>
<dbReference type="SUPFAM" id="SSF53448">
    <property type="entry name" value="Nucleotide-diphospho-sugar transferases"/>
    <property type="match status" value="1"/>
</dbReference>
<accession>Q84S18</accession>
<accession>A0A0P0X7A2</accession>
<organism>
    <name type="scientific">Oryza sativa subsp. japonica</name>
    <name type="common">Rice</name>
    <dbReference type="NCBI Taxonomy" id="39947"/>
    <lineage>
        <taxon>Eukaryota</taxon>
        <taxon>Viridiplantae</taxon>
        <taxon>Streptophyta</taxon>
        <taxon>Embryophyta</taxon>
        <taxon>Tracheophyta</taxon>
        <taxon>Spermatophyta</taxon>
        <taxon>Magnoliopsida</taxon>
        <taxon>Liliopsida</taxon>
        <taxon>Poales</taxon>
        <taxon>Poaceae</taxon>
        <taxon>BOP clade</taxon>
        <taxon>Oryzoideae</taxon>
        <taxon>Oryzeae</taxon>
        <taxon>Oryzinae</taxon>
        <taxon>Oryza</taxon>
        <taxon>Oryza sativa</taxon>
    </lineage>
</organism>
<evidence type="ECO:0000250" key="1"/>
<evidence type="ECO:0000255" key="2"/>
<evidence type="ECO:0000305" key="3"/>
<protein>
    <recommendedName>
        <fullName>Probable mixed-linked glucan synthase 8</fullName>
        <ecNumber>2.4.1.-</ecNumber>
    </recommendedName>
    <alternativeName>
        <fullName>1,3;1,4-beta-D-glucan synthase 8</fullName>
    </alternativeName>
    <alternativeName>
        <fullName>Cellulose synthase-like protein F8</fullName>
    </alternativeName>
    <alternativeName>
        <fullName>OsCslF8</fullName>
    </alternativeName>
</protein>
<feature type="chain" id="PRO_0000319408" description="Probable mixed-linked glucan synthase 8">
    <location>
        <begin position="1"/>
        <end position="886"/>
    </location>
</feature>
<feature type="transmembrane region" description="Helical" evidence="2">
    <location>
        <begin position="87"/>
        <end position="107"/>
    </location>
</feature>
<feature type="transmembrane region" description="Helical" evidence="2">
    <location>
        <begin position="118"/>
        <end position="138"/>
    </location>
</feature>
<feature type="transmembrane region" description="Helical" evidence="2">
    <location>
        <begin position="659"/>
        <end position="679"/>
    </location>
</feature>
<feature type="transmembrane region" description="Helical" evidence="2">
    <location>
        <begin position="683"/>
        <end position="703"/>
    </location>
</feature>
<feature type="transmembrane region" description="Helical" evidence="2">
    <location>
        <begin position="723"/>
        <end position="743"/>
    </location>
</feature>
<feature type="transmembrane region" description="Helical" evidence="2">
    <location>
        <begin position="775"/>
        <end position="795"/>
    </location>
</feature>
<feature type="transmembrane region" description="Helical" evidence="2">
    <location>
        <begin position="812"/>
        <end position="832"/>
    </location>
</feature>
<feature type="transmembrane region" description="Helical" evidence="2">
    <location>
        <begin position="840"/>
        <end position="860"/>
    </location>
</feature>
<feature type="active site" evidence="2">
    <location>
        <position position="213"/>
    </location>
</feature>
<feature type="active site" evidence="2">
    <location>
        <position position="577"/>
    </location>
</feature>
<feature type="binding site" evidence="2">
    <location>
        <position position="413"/>
    </location>
    <ligand>
        <name>substrate</name>
    </ligand>
</feature>
<feature type="binding site" evidence="2">
    <location>
        <position position="415"/>
    </location>
    <ligand>
        <name>substrate</name>
    </ligand>
</feature>
<feature type="sequence conflict" description="In Ref. 4; AK067424." evidence="3" ref="4">
    <original>Q</original>
    <variation>L</variation>
    <location>
        <position position="720"/>
    </location>
</feature>
<proteinExistence type="evidence at transcript level"/>